<protein>
    <recommendedName>
        <fullName evidence="1">Elongation factor G</fullName>
        <shortName evidence="1">EF-G</shortName>
    </recommendedName>
</protein>
<keyword id="KW-0963">Cytoplasm</keyword>
<keyword id="KW-0251">Elongation factor</keyword>
<keyword id="KW-0342">GTP-binding</keyword>
<keyword id="KW-0547">Nucleotide-binding</keyword>
<keyword id="KW-0648">Protein biosynthesis</keyword>
<feature type="chain" id="PRO_1000074973" description="Elongation factor G">
    <location>
        <begin position="1"/>
        <end position="693"/>
    </location>
</feature>
<feature type="domain" description="tr-type G">
    <location>
        <begin position="8"/>
        <end position="282"/>
    </location>
</feature>
<feature type="binding site" evidence="1">
    <location>
        <begin position="17"/>
        <end position="24"/>
    </location>
    <ligand>
        <name>GTP</name>
        <dbReference type="ChEBI" id="CHEBI:37565"/>
    </ligand>
</feature>
<feature type="binding site" evidence="1">
    <location>
        <begin position="81"/>
        <end position="85"/>
    </location>
    <ligand>
        <name>GTP</name>
        <dbReference type="ChEBI" id="CHEBI:37565"/>
    </ligand>
</feature>
<feature type="binding site" evidence="1">
    <location>
        <begin position="135"/>
        <end position="138"/>
    </location>
    <ligand>
        <name>GTP</name>
        <dbReference type="ChEBI" id="CHEBI:37565"/>
    </ligand>
</feature>
<name>EFG_STAA9</name>
<comment type="function">
    <text evidence="1">Catalyzes the GTP-dependent ribosomal translocation step during translation elongation. During this step, the ribosome changes from the pre-translocational (PRE) to the post-translocational (POST) state as the newly formed A-site-bound peptidyl-tRNA and P-site-bound deacylated tRNA move to the P and E sites, respectively. Catalyzes the coordinated movement of the two tRNA molecules, the mRNA and conformational changes in the ribosome.</text>
</comment>
<comment type="subcellular location">
    <subcellularLocation>
        <location evidence="1">Cytoplasm</location>
    </subcellularLocation>
</comment>
<comment type="similarity">
    <text evidence="1">Belongs to the TRAFAC class translation factor GTPase superfamily. Classic translation factor GTPase family. EF-G/EF-2 subfamily.</text>
</comment>
<evidence type="ECO:0000255" key="1">
    <source>
        <dbReference type="HAMAP-Rule" id="MF_00054"/>
    </source>
</evidence>
<organism>
    <name type="scientific">Staphylococcus aureus (strain JH9)</name>
    <dbReference type="NCBI Taxonomy" id="359786"/>
    <lineage>
        <taxon>Bacteria</taxon>
        <taxon>Bacillati</taxon>
        <taxon>Bacillota</taxon>
        <taxon>Bacilli</taxon>
        <taxon>Bacillales</taxon>
        <taxon>Staphylococcaceae</taxon>
        <taxon>Staphylococcus</taxon>
    </lineage>
</organism>
<sequence>MAREFSLEKTRNIGIMAHIDAGKTTTTERILYYTGRIHKIGETHEGASQMDWMEQEQDRGITITSAATTAAWEGHRVNIIDTPGHVDFTVEVERSLRVLDGAVTVLDAQSGVEPQTETVWRQATTYGVPRIVFVNKMDKLGANFEYSVSTLHDRLQANAAPIQLPIGAEDEFEAIIDLVEMKCFKYTNDLGTEIEEIEIPEDHLDRAEEARASLIEAVAETSDELMEKYLGDEEISVSELKEAIRQATTNVEFYPVLCGTAFKNKGVQLMLDAVIDYLPSPLDVKPIIGHRASNPEEEVIAKADDSAEFAALAFKVMTDPYVGKLTFFRVYSGTMTSGSYVKNSTKGKRERVGRLLQMHANSRQEIDTVYSGDIAAAVGLKDTGTGDTLCGEKNDIILESMEFPEPVIHLSVEPKSKADQDKMTQALVKLQEEDPTFHAHTDEETGQVIIGGMGELHLDILVDRMKKEFNVECNVGAPMVSYRETFKSSAQVQGKFSRQSGGRGQYGDVHIEFTPNETGAGFEFENAIVGGVVPREYIPSVEAGLKDAMENGVLAGYPLIDVKAKLYDGSYHDVDSSEMAFKIAASLALKEAAKKCDPVILEPMMKVTIEMPEEYMGDIMGDVTSRRGRVDGMEPRGNAQVVNAYVPLSEMFGYATSLRSNTQGRGTYTMYFDHYAEVPKSIAEDIIKKNKGE</sequence>
<dbReference type="EMBL" id="CP000703">
    <property type="protein sequence ID" value="ABQ48374.1"/>
    <property type="molecule type" value="Genomic_DNA"/>
</dbReference>
<dbReference type="RefSeq" id="WP_000090315.1">
    <property type="nucleotide sequence ID" value="NC_009487.1"/>
</dbReference>
<dbReference type="SMR" id="A5IQA1"/>
<dbReference type="KEGG" id="saj:SaurJH9_0570"/>
<dbReference type="HOGENOM" id="CLU_002794_4_1_9"/>
<dbReference type="GO" id="GO:0005737">
    <property type="term" value="C:cytoplasm"/>
    <property type="evidence" value="ECO:0007669"/>
    <property type="project" value="UniProtKB-SubCell"/>
</dbReference>
<dbReference type="GO" id="GO:0005525">
    <property type="term" value="F:GTP binding"/>
    <property type="evidence" value="ECO:0007669"/>
    <property type="project" value="UniProtKB-UniRule"/>
</dbReference>
<dbReference type="GO" id="GO:0003924">
    <property type="term" value="F:GTPase activity"/>
    <property type="evidence" value="ECO:0007669"/>
    <property type="project" value="InterPro"/>
</dbReference>
<dbReference type="GO" id="GO:0003746">
    <property type="term" value="F:translation elongation factor activity"/>
    <property type="evidence" value="ECO:0007669"/>
    <property type="project" value="UniProtKB-UniRule"/>
</dbReference>
<dbReference type="GO" id="GO:0032790">
    <property type="term" value="P:ribosome disassembly"/>
    <property type="evidence" value="ECO:0007669"/>
    <property type="project" value="TreeGrafter"/>
</dbReference>
<dbReference type="CDD" id="cd01886">
    <property type="entry name" value="EF-G"/>
    <property type="match status" value="1"/>
</dbReference>
<dbReference type="CDD" id="cd16262">
    <property type="entry name" value="EFG_III"/>
    <property type="match status" value="1"/>
</dbReference>
<dbReference type="CDD" id="cd01434">
    <property type="entry name" value="EFG_mtEFG1_IV"/>
    <property type="match status" value="1"/>
</dbReference>
<dbReference type="CDD" id="cd03713">
    <property type="entry name" value="EFG_mtEFG_C"/>
    <property type="match status" value="1"/>
</dbReference>
<dbReference type="CDD" id="cd04088">
    <property type="entry name" value="EFG_mtEFG_II"/>
    <property type="match status" value="1"/>
</dbReference>
<dbReference type="FunFam" id="2.40.30.10:FF:000006">
    <property type="entry name" value="Elongation factor G"/>
    <property type="match status" value="1"/>
</dbReference>
<dbReference type="FunFam" id="3.30.230.10:FF:000003">
    <property type="entry name" value="Elongation factor G"/>
    <property type="match status" value="1"/>
</dbReference>
<dbReference type="FunFam" id="3.30.70.240:FF:000001">
    <property type="entry name" value="Elongation factor G"/>
    <property type="match status" value="1"/>
</dbReference>
<dbReference type="FunFam" id="3.30.70.870:FF:000001">
    <property type="entry name" value="Elongation factor G"/>
    <property type="match status" value="1"/>
</dbReference>
<dbReference type="FunFam" id="3.40.50.300:FF:000029">
    <property type="entry name" value="Elongation factor G"/>
    <property type="match status" value="1"/>
</dbReference>
<dbReference type="Gene3D" id="3.30.230.10">
    <property type="match status" value="1"/>
</dbReference>
<dbReference type="Gene3D" id="3.30.70.240">
    <property type="match status" value="1"/>
</dbReference>
<dbReference type="Gene3D" id="3.30.70.870">
    <property type="entry name" value="Elongation Factor G (Translational Gtpase), domain 3"/>
    <property type="match status" value="1"/>
</dbReference>
<dbReference type="Gene3D" id="3.40.50.300">
    <property type="entry name" value="P-loop containing nucleotide triphosphate hydrolases"/>
    <property type="match status" value="1"/>
</dbReference>
<dbReference type="Gene3D" id="2.40.30.10">
    <property type="entry name" value="Translation factors"/>
    <property type="match status" value="1"/>
</dbReference>
<dbReference type="HAMAP" id="MF_00054_B">
    <property type="entry name" value="EF_G_EF_2_B"/>
    <property type="match status" value="1"/>
</dbReference>
<dbReference type="InterPro" id="IPR041095">
    <property type="entry name" value="EFG_II"/>
</dbReference>
<dbReference type="InterPro" id="IPR009022">
    <property type="entry name" value="EFG_III"/>
</dbReference>
<dbReference type="InterPro" id="IPR035647">
    <property type="entry name" value="EFG_III/V"/>
</dbReference>
<dbReference type="InterPro" id="IPR047872">
    <property type="entry name" value="EFG_IV"/>
</dbReference>
<dbReference type="InterPro" id="IPR035649">
    <property type="entry name" value="EFG_V"/>
</dbReference>
<dbReference type="InterPro" id="IPR000640">
    <property type="entry name" value="EFG_V-like"/>
</dbReference>
<dbReference type="InterPro" id="IPR004161">
    <property type="entry name" value="EFTu-like_2"/>
</dbReference>
<dbReference type="InterPro" id="IPR031157">
    <property type="entry name" value="G_TR_CS"/>
</dbReference>
<dbReference type="InterPro" id="IPR027417">
    <property type="entry name" value="P-loop_NTPase"/>
</dbReference>
<dbReference type="InterPro" id="IPR020568">
    <property type="entry name" value="Ribosomal_Su5_D2-typ_SF"/>
</dbReference>
<dbReference type="InterPro" id="IPR014721">
    <property type="entry name" value="Ribsml_uS5_D2-typ_fold_subgr"/>
</dbReference>
<dbReference type="InterPro" id="IPR005225">
    <property type="entry name" value="Small_GTP-bd"/>
</dbReference>
<dbReference type="InterPro" id="IPR000795">
    <property type="entry name" value="T_Tr_GTP-bd_dom"/>
</dbReference>
<dbReference type="InterPro" id="IPR009000">
    <property type="entry name" value="Transl_B-barrel_sf"/>
</dbReference>
<dbReference type="InterPro" id="IPR004540">
    <property type="entry name" value="Transl_elong_EFG/EF2"/>
</dbReference>
<dbReference type="InterPro" id="IPR005517">
    <property type="entry name" value="Transl_elong_EFG/EF2_IV"/>
</dbReference>
<dbReference type="NCBIfam" id="TIGR00484">
    <property type="entry name" value="EF-G"/>
    <property type="match status" value="1"/>
</dbReference>
<dbReference type="NCBIfam" id="NF009379">
    <property type="entry name" value="PRK12740.1-3"/>
    <property type="match status" value="1"/>
</dbReference>
<dbReference type="NCBIfam" id="NF009381">
    <property type="entry name" value="PRK12740.1-5"/>
    <property type="match status" value="1"/>
</dbReference>
<dbReference type="NCBIfam" id="TIGR00231">
    <property type="entry name" value="small_GTP"/>
    <property type="match status" value="1"/>
</dbReference>
<dbReference type="PANTHER" id="PTHR43261:SF1">
    <property type="entry name" value="RIBOSOME-RELEASING FACTOR 2, MITOCHONDRIAL"/>
    <property type="match status" value="1"/>
</dbReference>
<dbReference type="PANTHER" id="PTHR43261">
    <property type="entry name" value="TRANSLATION ELONGATION FACTOR G-RELATED"/>
    <property type="match status" value="1"/>
</dbReference>
<dbReference type="Pfam" id="PF00679">
    <property type="entry name" value="EFG_C"/>
    <property type="match status" value="1"/>
</dbReference>
<dbReference type="Pfam" id="PF14492">
    <property type="entry name" value="EFG_III"/>
    <property type="match status" value="1"/>
</dbReference>
<dbReference type="Pfam" id="PF03764">
    <property type="entry name" value="EFG_IV"/>
    <property type="match status" value="1"/>
</dbReference>
<dbReference type="Pfam" id="PF00009">
    <property type="entry name" value="GTP_EFTU"/>
    <property type="match status" value="1"/>
</dbReference>
<dbReference type="Pfam" id="PF03144">
    <property type="entry name" value="GTP_EFTU_D2"/>
    <property type="match status" value="1"/>
</dbReference>
<dbReference type="PRINTS" id="PR00315">
    <property type="entry name" value="ELONGATNFCT"/>
</dbReference>
<dbReference type="SMART" id="SM00838">
    <property type="entry name" value="EFG_C"/>
    <property type="match status" value="1"/>
</dbReference>
<dbReference type="SMART" id="SM00889">
    <property type="entry name" value="EFG_IV"/>
    <property type="match status" value="1"/>
</dbReference>
<dbReference type="SUPFAM" id="SSF54980">
    <property type="entry name" value="EF-G C-terminal domain-like"/>
    <property type="match status" value="2"/>
</dbReference>
<dbReference type="SUPFAM" id="SSF52540">
    <property type="entry name" value="P-loop containing nucleoside triphosphate hydrolases"/>
    <property type="match status" value="1"/>
</dbReference>
<dbReference type="SUPFAM" id="SSF54211">
    <property type="entry name" value="Ribosomal protein S5 domain 2-like"/>
    <property type="match status" value="1"/>
</dbReference>
<dbReference type="SUPFAM" id="SSF50447">
    <property type="entry name" value="Translation proteins"/>
    <property type="match status" value="1"/>
</dbReference>
<dbReference type="PROSITE" id="PS00301">
    <property type="entry name" value="G_TR_1"/>
    <property type="match status" value="1"/>
</dbReference>
<dbReference type="PROSITE" id="PS51722">
    <property type="entry name" value="G_TR_2"/>
    <property type="match status" value="1"/>
</dbReference>
<reference key="1">
    <citation type="submission" date="2007-05" db="EMBL/GenBank/DDBJ databases">
        <title>Complete sequence of chromosome of Staphylococcus aureus subsp. aureus JH9.</title>
        <authorList>
            <consortium name="US DOE Joint Genome Institute"/>
            <person name="Copeland A."/>
            <person name="Lucas S."/>
            <person name="Lapidus A."/>
            <person name="Barry K."/>
            <person name="Detter J.C."/>
            <person name="Glavina del Rio T."/>
            <person name="Hammon N."/>
            <person name="Israni S."/>
            <person name="Pitluck S."/>
            <person name="Chain P."/>
            <person name="Malfatti S."/>
            <person name="Shin M."/>
            <person name="Vergez L."/>
            <person name="Schmutz J."/>
            <person name="Larimer F."/>
            <person name="Land M."/>
            <person name="Hauser L."/>
            <person name="Kyrpides N."/>
            <person name="Kim E."/>
            <person name="Tomasz A."/>
            <person name="Richardson P."/>
        </authorList>
    </citation>
    <scope>NUCLEOTIDE SEQUENCE [LARGE SCALE GENOMIC DNA]</scope>
    <source>
        <strain>JH9</strain>
    </source>
</reference>
<accession>A5IQA1</accession>
<proteinExistence type="inferred from homology"/>
<gene>
    <name evidence="1" type="primary">fusA</name>
    <name type="ordered locus">SaurJH9_0570</name>
</gene>